<gene>
    <name type="primary">CTSL</name>
    <name type="synonym">CTSL1</name>
</gene>
<feature type="signal peptide" evidence="3">
    <location>
        <begin position="1"/>
        <end position="17"/>
    </location>
</feature>
<feature type="propeptide" id="PRO_0000026252" description="Activation peptide">
    <location>
        <begin position="18"/>
        <end position="117"/>
    </location>
</feature>
<feature type="chain" id="PRO_0000450793" description="Cathepsin L" evidence="4">
    <location>
        <begin position="118"/>
        <end position="334"/>
    </location>
</feature>
<feature type="chain" id="PRO_0000026253" description="Cathepsin L heavy chain">
    <location>
        <begin position="118"/>
        <end position="289"/>
    </location>
</feature>
<feature type="propeptide" id="PRO_0000026254" evidence="1">
    <location>
        <begin position="290"/>
        <end position="291"/>
    </location>
</feature>
<feature type="chain" id="PRO_0000026255" description="Cathepsin L light chain">
    <location>
        <begin position="292"/>
        <end position="334"/>
    </location>
</feature>
<feature type="active site" evidence="4">
    <location>
        <position position="138"/>
    </location>
</feature>
<feature type="active site" evidence="4">
    <location>
        <position position="277"/>
    </location>
</feature>
<feature type="active site" evidence="4">
    <location>
        <position position="301"/>
    </location>
</feature>
<feature type="binding site" evidence="4">
    <location>
        <position position="122"/>
    </location>
    <ligand>
        <name>Zn(2+)</name>
        <dbReference type="ChEBI" id="CHEBI:29105"/>
        <label>1</label>
    </ligand>
</feature>
<feature type="binding site" evidence="4">
    <location>
        <position position="163"/>
    </location>
    <ligand>
        <name>Zn(2+)</name>
        <dbReference type="ChEBI" id="CHEBI:29105"/>
        <label>2</label>
    </ligand>
</feature>
<feature type="binding site" evidence="4">
    <location>
        <position position="184"/>
    </location>
    <ligand>
        <name>Zn(2+)</name>
        <dbReference type="ChEBI" id="CHEBI:29105"/>
        <label>3</label>
    </ligand>
</feature>
<feature type="binding site" evidence="4">
    <location>
        <position position="199"/>
    </location>
    <ligand>
        <name>Zn(2+)</name>
        <dbReference type="ChEBI" id="CHEBI:29105"/>
        <label>2</label>
    </ligand>
</feature>
<feature type="binding site" evidence="4">
    <location>
        <position position="228"/>
    </location>
    <ligand>
        <name>Zn(2+)</name>
        <dbReference type="ChEBI" id="CHEBI:29105"/>
        <label>3</label>
    </ligand>
</feature>
<feature type="binding site" evidence="4">
    <location>
        <position position="251"/>
    </location>
    <ligand>
        <name>Zn(2+)</name>
        <dbReference type="ChEBI" id="CHEBI:29105"/>
        <label>5</label>
    </ligand>
</feature>
<feature type="binding site" evidence="4">
    <location>
        <position position="254"/>
    </location>
    <ligand>
        <name>Zn(2+)</name>
        <dbReference type="ChEBI" id="CHEBI:29105"/>
        <label>5</label>
    </ligand>
</feature>
<feature type="binding site" evidence="4">
    <location>
        <position position="274"/>
    </location>
    <ligand>
        <name>Zn(2+)</name>
        <dbReference type="ChEBI" id="CHEBI:29105"/>
        <label>6</label>
    </ligand>
</feature>
<feature type="binding site" evidence="4">
    <location>
        <position position="276"/>
    </location>
    <ligand>
        <name>Zn(2+)</name>
        <dbReference type="ChEBI" id="CHEBI:29105"/>
        <label>7</label>
    </ligand>
</feature>
<feature type="site" description="Cleavage; by autolysis" evidence="4">
    <location>
        <begin position="106"/>
        <end position="107"/>
    </location>
</feature>
<feature type="site" description="Cleavage; by autolysis" evidence="4">
    <location>
        <begin position="107"/>
        <end position="108"/>
    </location>
</feature>
<feature type="site" description="Cleavage; by autolysis" evidence="4">
    <location>
        <begin position="112"/>
        <end position="113"/>
    </location>
</feature>
<feature type="site" description="Cleavage; by autolysis" evidence="4">
    <location>
        <begin position="113"/>
        <end position="114"/>
    </location>
</feature>
<feature type="glycosylation site" description="N-linked (GlcNAc...) asparagine" evidence="6">
    <location>
        <position position="222"/>
    </location>
</feature>
<feature type="glycosylation site" description="N-linked (GlcNAc...) asparagine" evidence="6">
    <location>
        <position position="292"/>
    </location>
</feature>
<feature type="disulfide bond" evidence="4">
    <location>
        <begin position="135"/>
        <end position="178"/>
    </location>
</feature>
<feature type="disulfide bond" evidence="4">
    <location>
        <begin position="169"/>
        <end position="212"/>
    </location>
</feature>
<feature type="disulfide bond" description="Interchain (between heavy and light chains)" evidence="4">
    <location>
        <begin position="270"/>
        <end position="323"/>
    </location>
</feature>
<accession>Q28944</accession>
<comment type="function">
    <text evidence="2 3 4 5">Thiol protease important for the overall degradation of proteins in lysosomes (By similarity). Plays a critical for normal cellular functions such as general protein turnover, antigen processing and bone remodeling. Involved in the solubilization of cross-linked TG/thyroglobulin and in the subsequent release of thyroid hormone thyroxine (T4) by limited proteolysis of TG/thyroglobulin in the thyroid follicle lumen (By similarity). In neuroendocrine chromaffin cells secretory vesicles, catalyzes the prohormone proenkephalin processing to the active enkephalin peptide neurotransmitter (By similarity). In thymus, regulates CD4(+) T cell positive selection by generating the major histocompatibility complex class II (MHCII) bound peptide ligands presented by cortical thymic epithelial cells. Also mediates invariant chain processing in cortical thymic epithelial cells. Major elastin-degrading enzyme at neutral pH. Accumulates as a mature and active enzyme in the extracellular space of antigen presenting cells (APCs) to regulate degradation of the extracellular matrix in the course of inflammation (By similarity). Secreted form generates endostatin from COL18A1 (By similarity). Critical for cardiac morphology and function. Plays an important role in hair follicle morphogenesis and cycling, as well as epidermal differentiation (By similarity). Required for maximal stimulation of steroidogenesis by TIMP1 (By similarity).</text>
</comment>
<comment type="catalytic activity">
    <reaction evidence="4">
        <text>Specificity close to that of papain. As compared to cathepsin B, cathepsin L exhibits higher activity toward protein substrates, but has little activity on Z-Arg-Arg-NHMec, and no peptidyl-dipeptidase activity.</text>
        <dbReference type="EC" id="3.4.22.15"/>
    </reaction>
</comment>
<comment type="activity regulation">
    <text evidence="2 4">Inhibited by the propeptide produced by autocleavage (By similarity). Long isoform of CD74/Ii chain stabilizes the conformation of mature CTSL by binding to its active site and serving as a chaperone to help maintain a pool of mature enzyme in endocytic compartments and extracellular space of APCs. IFNG enhances the conversion into the CTSL mature and active form (By similarity). Inhibited by CST6. Inhibited by the glycopeptide antibiotic teicoplanin. Inhibited by amantadine (By similarity).</text>
</comment>
<comment type="subunit">
    <text evidence="2">Dimer of a heavy and a light chain linked by disulfide bonds. Interacts with Long isoform of CD74/Ii chain; the interaction stabilizes the conformation of mature CTSL.</text>
</comment>
<comment type="subcellular location">
    <subcellularLocation>
        <location evidence="2">Lysosome</location>
    </subcellularLocation>
    <subcellularLocation>
        <location evidence="2">Apical cell membrane</location>
        <topology evidence="2">Peripheral membrane protein</topology>
        <orientation evidence="2">Extracellular side</orientation>
    </subcellularLocation>
    <subcellularLocation>
        <location evidence="5">Cytoplasmic vesicle</location>
        <location evidence="5">Secretory vesicle</location>
        <location evidence="5">Chromaffin granule</location>
    </subcellularLocation>
    <subcellularLocation>
        <location evidence="2">Secreted</location>
        <location evidence="2">Extracellular space</location>
    </subcellularLocation>
    <subcellularLocation>
        <location evidence="2">Secreted</location>
    </subcellularLocation>
    <text evidence="2">Localizes to the apical membrane of thyroid epithelial cells. Released at extracellular space by activated dendritic cells and macrophages.</text>
</comment>
<comment type="PTM">
    <text evidence="2 4">During export along the endocytic pathway, pro-CTSL undergoes several proteolytic cleavages to generate the CTSL single-chain and two-chain mature forms, composed of a heavy chain linked to a light chain by disulfide bonds (By similarity). Autocleavage; produces the single-chain CTSL after cleavage of the propeptide. The cleavage can be intermolecular (By similarity).</text>
</comment>
<comment type="similarity">
    <text evidence="7 8 9">Belongs to the peptidase C1 family.</text>
</comment>
<protein>
    <recommendedName>
        <fullName>Procathepsin L</fullName>
        <ecNumber>3.4.22.15</ecNumber>
    </recommendedName>
    <alternativeName>
        <fullName>Cathepsin L1</fullName>
    </alternativeName>
    <component>
        <recommendedName>
            <fullName>Cathepsin L</fullName>
        </recommendedName>
    </component>
    <component>
        <recommendedName>
            <fullName>Cathepsin L heavy chain</fullName>
        </recommendedName>
    </component>
    <component>
        <recommendedName>
            <fullName>Cathepsin L light chain</fullName>
        </recommendedName>
    </component>
</protein>
<name>CATL1_PIG</name>
<organism>
    <name type="scientific">Sus scrofa</name>
    <name type="common">Pig</name>
    <dbReference type="NCBI Taxonomy" id="9823"/>
    <lineage>
        <taxon>Eukaryota</taxon>
        <taxon>Metazoa</taxon>
        <taxon>Chordata</taxon>
        <taxon>Craniata</taxon>
        <taxon>Vertebrata</taxon>
        <taxon>Euteleostomi</taxon>
        <taxon>Mammalia</taxon>
        <taxon>Eutheria</taxon>
        <taxon>Laurasiatheria</taxon>
        <taxon>Artiodactyla</taxon>
        <taxon>Suina</taxon>
        <taxon>Suidae</taxon>
        <taxon>Sus</taxon>
    </lineage>
</organism>
<dbReference type="EC" id="3.4.22.15"/>
<dbReference type="EMBL" id="D37917">
    <property type="protein sequence ID" value="BAA07140.1"/>
    <property type="molecule type" value="mRNA"/>
</dbReference>
<dbReference type="EMBL" id="AJ315771">
    <property type="protein sequence ID" value="CAC44793.1"/>
    <property type="molecule type" value="Genomic_DNA"/>
</dbReference>
<dbReference type="PIR" id="A58195">
    <property type="entry name" value="A58195"/>
</dbReference>
<dbReference type="RefSeq" id="NP_999057.1">
    <property type="nucleotide sequence ID" value="NM_213892.1"/>
</dbReference>
<dbReference type="RefSeq" id="XP_005653866.1">
    <property type="nucleotide sequence ID" value="XM_005653809.2"/>
</dbReference>
<dbReference type="RefSeq" id="XP_005653867.1">
    <property type="nucleotide sequence ID" value="XM_005653810.2"/>
</dbReference>
<dbReference type="SMR" id="Q28944"/>
<dbReference type="FunCoup" id="Q28944">
    <property type="interactions" value="558"/>
</dbReference>
<dbReference type="STRING" id="9823.ENSSSCP00000011919"/>
<dbReference type="MEROPS" id="C01.032"/>
<dbReference type="MEROPS" id="I29.010"/>
<dbReference type="GlyCosmos" id="Q28944">
    <property type="glycosylation" value="2 sites, No reported glycans"/>
</dbReference>
<dbReference type="GlyGen" id="Q28944">
    <property type="glycosylation" value="2 sites"/>
</dbReference>
<dbReference type="PaxDb" id="9823-ENSSSCP00000011919"/>
<dbReference type="PeptideAtlas" id="Q28944"/>
<dbReference type="Ensembl" id="ENSSSCT00000012233.5">
    <property type="protein sequence ID" value="ENSSSCP00000011919.2"/>
    <property type="gene ID" value="ENSSSCG00000011171.5"/>
</dbReference>
<dbReference type="Ensembl" id="ENSSSCT00015060670.1">
    <property type="protein sequence ID" value="ENSSSCP00015024378.1"/>
    <property type="gene ID" value="ENSSSCG00015045358.1"/>
</dbReference>
<dbReference type="Ensembl" id="ENSSSCT00025021800.1">
    <property type="protein sequence ID" value="ENSSSCP00025008981.1"/>
    <property type="gene ID" value="ENSSSCG00025016215.1"/>
</dbReference>
<dbReference type="Ensembl" id="ENSSSCT00030005703.1">
    <property type="protein sequence ID" value="ENSSSCP00030002358.1"/>
    <property type="gene ID" value="ENSSSCG00030004321.1"/>
</dbReference>
<dbReference type="Ensembl" id="ENSSSCT00035110009.1">
    <property type="protein sequence ID" value="ENSSSCP00035047865.1"/>
    <property type="gene ID" value="ENSSSCG00035080320.1"/>
</dbReference>
<dbReference type="Ensembl" id="ENSSSCT00040019276.1">
    <property type="protein sequence ID" value="ENSSSCP00040007958.1"/>
    <property type="gene ID" value="ENSSSCG00040014397.1"/>
</dbReference>
<dbReference type="Ensembl" id="ENSSSCT00045062746.1">
    <property type="protein sequence ID" value="ENSSSCP00045044208.1"/>
    <property type="gene ID" value="ENSSSCG00045036451.1"/>
</dbReference>
<dbReference type="Ensembl" id="ENSSSCT00050045360.1">
    <property type="protein sequence ID" value="ENSSSCP00050018638.1"/>
    <property type="gene ID" value="ENSSSCG00050033834.1"/>
</dbReference>
<dbReference type="Ensembl" id="ENSSSCT00055001011.1">
    <property type="protein sequence ID" value="ENSSSCP00055000731.1"/>
    <property type="gene ID" value="ENSSSCG00055000591.1"/>
</dbReference>
<dbReference type="Ensembl" id="ENSSSCT00060105594.1">
    <property type="protein sequence ID" value="ENSSSCP00060046442.1"/>
    <property type="gene ID" value="ENSSSCG00060076857.1"/>
</dbReference>
<dbReference type="Ensembl" id="ENSSSCT00085001765">
    <property type="protein sequence ID" value="ENSSSCP00085001288"/>
    <property type="gene ID" value="ENSSSCG00085001240"/>
</dbReference>
<dbReference type="Ensembl" id="ENSSSCT00090015381">
    <property type="protein sequence ID" value="ENSSSCP00090009928"/>
    <property type="gene ID" value="ENSSSCG00090008547"/>
</dbReference>
<dbReference type="Ensembl" id="ENSSSCT00105044310">
    <property type="protein sequence ID" value="ENSSSCP00105030869"/>
    <property type="gene ID" value="ENSSSCG00105023308"/>
</dbReference>
<dbReference type="Ensembl" id="ENSSSCT00110036601">
    <property type="protein sequence ID" value="ENSSSCP00110025050"/>
    <property type="gene ID" value="ENSSSCG00110019124"/>
</dbReference>
<dbReference type="Ensembl" id="ENSSSCT00115011929">
    <property type="protein sequence ID" value="ENSSSCP00115011261"/>
    <property type="gene ID" value="ENSSSCG00115006827"/>
</dbReference>
<dbReference type="Ensembl" id="ENSSSCT00130010926">
    <property type="protein sequence ID" value="ENSSSCP00130007195"/>
    <property type="gene ID" value="ENSSSCG00130005888"/>
</dbReference>
<dbReference type="GeneID" id="396926"/>
<dbReference type="KEGG" id="ssc:396926"/>
<dbReference type="CTD" id="1515"/>
<dbReference type="eggNOG" id="KOG1543">
    <property type="taxonomic scope" value="Eukaryota"/>
</dbReference>
<dbReference type="GeneTree" id="ENSGT00940000154367"/>
<dbReference type="HOGENOM" id="CLU_012184_1_2_1"/>
<dbReference type="InParanoid" id="Q28944"/>
<dbReference type="OMA" id="VYYDEEC"/>
<dbReference type="OrthoDB" id="10253408at2759"/>
<dbReference type="TreeFam" id="TF313739"/>
<dbReference type="Reactome" id="R-SSC-1592389">
    <property type="pathway name" value="Activation of Matrix Metalloproteinases"/>
</dbReference>
<dbReference type="Reactome" id="R-SSC-1679131">
    <property type="pathway name" value="Trafficking and processing of endosomal TLR"/>
</dbReference>
<dbReference type="Reactome" id="R-SSC-2022090">
    <property type="pathway name" value="Assembly of collagen fibrils and other multimeric structures"/>
</dbReference>
<dbReference type="Proteomes" id="UP000008227">
    <property type="component" value="Chromosome 10"/>
</dbReference>
<dbReference type="Proteomes" id="UP000314985">
    <property type="component" value="Unplaced"/>
</dbReference>
<dbReference type="Proteomes" id="UP000694570">
    <property type="component" value="Unplaced"/>
</dbReference>
<dbReference type="Proteomes" id="UP000694571">
    <property type="component" value="Unplaced"/>
</dbReference>
<dbReference type="Proteomes" id="UP000694720">
    <property type="component" value="Unplaced"/>
</dbReference>
<dbReference type="Proteomes" id="UP000694722">
    <property type="component" value="Unplaced"/>
</dbReference>
<dbReference type="Proteomes" id="UP000694723">
    <property type="component" value="Unplaced"/>
</dbReference>
<dbReference type="Proteomes" id="UP000694724">
    <property type="component" value="Unplaced"/>
</dbReference>
<dbReference type="Proteomes" id="UP000694725">
    <property type="component" value="Unplaced"/>
</dbReference>
<dbReference type="Proteomes" id="UP000694726">
    <property type="component" value="Unplaced"/>
</dbReference>
<dbReference type="Proteomes" id="UP000694727">
    <property type="component" value="Unplaced"/>
</dbReference>
<dbReference type="Proteomes" id="UP000694728">
    <property type="component" value="Unplaced"/>
</dbReference>
<dbReference type="Bgee" id="ENSSSCG00000011171">
    <property type="expression patterns" value="Expressed in metanephros cortex and 47 other cell types or tissues"/>
</dbReference>
<dbReference type="GO" id="GO:0016324">
    <property type="term" value="C:apical plasma membrane"/>
    <property type="evidence" value="ECO:0007669"/>
    <property type="project" value="UniProtKB-SubCell"/>
</dbReference>
<dbReference type="GO" id="GO:0042583">
    <property type="term" value="C:chromaffin granule"/>
    <property type="evidence" value="ECO:0000250"/>
    <property type="project" value="UniProtKB"/>
</dbReference>
<dbReference type="GO" id="GO:0005615">
    <property type="term" value="C:extracellular space"/>
    <property type="evidence" value="ECO:0000250"/>
    <property type="project" value="UniProtKB"/>
</dbReference>
<dbReference type="GO" id="GO:0005764">
    <property type="term" value="C:lysosome"/>
    <property type="evidence" value="ECO:0000250"/>
    <property type="project" value="UniProtKB"/>
</dbReference>
<dbReference type="GO" id="GO:0004197">
    <property type="term" value="F:cysteine-type endopeptidase activity"/>
    <property type="evidence" value="ECO:0000250"/>
    <property type="project" value="UniProtKB"/>
</dbReference>
<dbReference type="GO" id="GO:0004175">
    <property type="term" value="F:endopeptidase activity"/>
    <property type="evidence" value="ECO:0000250"/>
    <property type="project" value="UniProtKB"/>
</dbReference>
<dbReference type="GO" id="GO:0046872">
    <property type="term" value="F:metal ion binding"/>
    <property type="evidence" value="ECO:0007669"/>
    <property type="project" value="UniProtKB-KW"/>
</dbReference>
<dbReference type="GO" id="GO:0048002">
    <property type="term" value="P:antigen processing and presentation of peptide antigen"/>
    <property type="evidence" value="ECO:0000250"/>
    <property type="project" value="UniProtKB"/>
</dbReference>
<dbReference type="GO" id="GO:0043373">
    <property type="term" value="P:CD4-positive, alpha-beta T cell lineage commitment"/>
    <property type="evidence" value="ECO:0000250"/>
    <property type="project" value="UniProtKB"/>
</dbReference>
<dbReference type="GO" id="GO:0030574">
    <property type="term" value="P:collagen catabolic process"/>
    <property type="evidence" value="ECO:0000250"/>
    <property type="project" value="UniProtKB"/>
</dbReference>
<dbReference type="GO" id="GO:0060309">
    <property type="term" value="P:elastin catabolic process"/>
    <property type="evidence" value="ECO:0000250"/>
    <property type="project" value="UniProtKB"/>
</dbReference>
<dbReference type="GO" id="GO:0034230">
    <property type="term" value="P:enkephalin processing"/>
    <property type="evidence" value="ECO:0000250"/>
    <property type="project" value="UniProtKB"/>
</dbReference>
<dbReference type="GO" id="GO:0016540">
    <property type="term" value="P:protein autoprocessing"/>
    <property type="evidence" value="ECO:0000250"/>
    <property type="project" value="UniProtKB"/>
</dbReference>
<dbReference type="GO" id="GO:0051603">
    <property type="term" value="P:proteolysis involved in protein catabolic process"/>
    <property type="evidence" value="ECO:0000318"/>
    <property type="project" value="GO_Central"/>
</dbReference>
<dbReference type="GO" id="GO:0031638">
    <property type="term" value="P:zymogen activation"/>
    <property type="evidence" value="ECO:0000250"/>
    <property type="project" value="UniProtKB"/>
</dbReference>
<dbReference type="CDD" id="cd02248">
    <property type="entry name" value="Peptidase_C1A"/>
    <property type="match status" value="1"/>
</dbReference>
<dbReference type="FunFam" id="1.10.287.2250:FF:000003">
    <property type="entry name" value="Cathepsin L"/>
    <property type="match status" value="1"/>
</dbReference>
<dbReference type="FunFam" id="3.90.70.10:FF:000332">
    <property type="entry name" value="Cathepsin L1"/>
    <property type="match status" value="1"/>
</dbReference>
<dbReference type="Gene3D" id="3.90.70.10">
    <property type="entry name" value="Cysteine proteinases"/>
    <property type="match status" value="1"/>
</dbReference>
<dbReference type="InterPro" id="IPR038765">
    <property type="entry name" value="Papain-like_cys_pep_sf"/>
</dbReference>
<dbReference type="InterPro" id="IPR025661">
    <property type="entry name" value="Pept_asp_AS"/>
</dbReference>
<dbReference type="InterPro" id="IPR000169">
    <property type="entry name" value="Pept_cys_AS"/>
</dbReference>
<dbReference type="InterPro" id="IPR025660">
    <property type="entry name" value="Pept_his_AS"/>
</dbReference>
<dbReference type="InterPro" id="IPR013128">
    <property type="entry name" value="Peptidase_C1A"/>
</dbReference>
<dbReference type="InterPro" id="IPR000668">
    <property type="entry name" value="Peptidase_C1A_C"/>
</dbReference>
<dbReference type="InterPro" id="IPR039417">
    <property type="entry name" value="Peptidase_C1A_papain-like"/>
</dbReference>
<dbReference type="InterPro" id="IPR013201">
    <property type="entry name" value="Prot_inhib_I29"/>
</dbReference>
<dbReference type="PANTHER" id="PTHR12411">
    <property type="entry name" value="CYSTEINE PROTEASE FAMILY C1-RELATED"/>
    <property type="match status" value="1"/>
</dbReference>
<dbReference type="Pfam" id="PF08246">
    <property type="entry name" value="Inhibitor_I29"/>
    <property type="match status" value="1"/>
</dbReference>
<dbReference type="Pfam" id="PF00112">
    <property type="entry name" value="Peptidase_C1"/>
    <property type="match status" value="1"/>
</dbReference>
<dbReference type="PRINTS" id="PR00705">
    <property type="entry name" value="PAPAIN"/>
</dbReference>
<dbReference type="SMART" id="SM00848">
    <property type="entry name" value="Inhibitor_I29"/>
    <property type="match status" value="1"/>
</dbReference>
<dbReference type="SMART" id="SM00645">
    <property type="entry name" value="Pept_C1"/>
    <property type="match status" value="1"/>
</dbReference>
<dbReference type="SUPFAM" id="SSF54001">
    <property type="entry name" value="Cysteine proteinases"/>
    <property type="match status" value="1"/>
</dbReference>
<dbReference type="PROSITE" id="PS00640">
    <property type="entry name" value="THIOL_PROTEASE_ASN"/>
    <property type="match status" value="1"/>
</dbReference>
<dbReference type="PROSITE" id="PS00139">
    <property type="entry name" value="THIOL_PROTEASE_CYS"/>
    <property type="match status" value="1"/>
</dbReference>
<dbReference type="PROSITE" id="PS00639">
    <property type="entry name" value="THIOL_PROTEASE_HIS"/>
    <property type="match status" value="1"/>
</dbReference>
<reference key="1">
    <citation type="journal article" date="1995" name="Biochim. Biophys. Acta">
        <title>Direct evidence for the elevated synthesis and secretion of procathepsin L in the distal caput epididymis of boar.</title>
        <authorList>
            <person name="Okamura N."/>
            <person name="Tamba M."/>
            <person name="Uchiyama Y."/>
            <person name="Sugita Y."/>
            <person name="Dacheux F."/>
            <person name="Syntin P."/>
            <person name="Dacheux J.-L."/>
        </authorList>
    </citation>
    <scope>NUCLEOTIDE SEQUENCE [MRNA]</scope>
    <source>
        <tissue>Epididymis</tissue>
    </source>
</reference>
<reference key="2">
    <citation type="journal article" date="2001" name="Cytogenet. Cell Genet.">
        <title>Characterization and comparative mapping of the porcine CTSL gene indicates a novel synteny between HSA9q21--&gt;q22 and SSC10q11--&gt;q12.</title>
        <authorList>
            <person name="Spoetter A."/>
            <person name="Droegemueller C."/>
            <person name="Kuiper H."/>
            <person name="Brenig B."/>
            <person name="Leeb T."/>
            <person name="Distl O."/>
        </authorList>
    </citation>
    <scope>NUCLEOTIDE SEQUENCE [GENOMIC DNA]</scope>
</reference>
<evidence type="ECO:0000250" key="1"/>
<evidence type="ECO:0000250" key="2">
    <source>
        <dbReference type="UniProtKB" id="P06797"/>
    </source>
</evidence>
<evidence type="ECO:0000250" key="3">
    <source>
        <dbReference type="UniProtKB" id="P07154"/>
    </source>
</evidence>
<evidence type="ECO:0000250" key="4">
    <source>
        <dbReference type="UniProtKB" id="P07711"/>
    </source>
</evidence>
<evidence type="ECO:0000250" key="5">
    <source>
        <dbReference type="UniProtKB" id="P25975"/>
    </source>
</evidence>
<evidence type="ECO:0000255" key="6"/>
<evidence type="ECO:0000255" key="7">
    <source>
        <dbReference type="PROSITE-ProRule" id="PRU10088"/>
    </source>
</evidence>
<evidence type="ECO:0000255" key="8">
    <source>
        <dbReference type="PROSITE-ProRule" id="PRU10089"/>
    </source>
</evidence>
<evidence type="ECO:0000255" key="9">
    <source>
        <dbReference type="PROSITE-ProRule" id="PRU10090"/>
    </source>
</evidence>
<sequence>MKPSLFLTALCLGIASAAPKLDQNLDADWYKWKATHGRLYGMNEEGWRRAVWEKNMKMIELHNQEYSQGKHGFSMAMNAFGDMTNEEFRQVMNGFQNQKHKKGKVFHESLVLEVPKSVDWREKGYVTAVKNQGQCGSCWAFSATGALEGQMFRKTGKLVSLSEQNLVDCSRPQGNQGCNGGLMDNAFQYVKDNGGLDTEESYPYLGRETNSCTYKPECSAANDTGFVDIPQREKALMKAVATVGPISVAIDAGHSSFQFYKSGIYYDPDCSSKDLDHGVLVVGYGFEGTDSNSSKFWIVKNSWGPEWGWNGYVKMAKDQNNHCGISTAASYPTV</sequence>
<proteinExistence type="evidence at transcript level"/>
<keyword id="KW-1003">Cell membrane</keyword>
<keyword id="KW-0968">Cytoplasmic vesicle</keyword>
<keyword id="KW-1015">Disulfide bond</keyword>
<keyword id="KW-0325">Glycoprotein</keyword>
<keyword id="KW-0378">Hydrolase</keyword>
<keyword id="KW-0458">Lysosome</keyword>
<keyword id="KW-0472">Membrane</keyword>
<keyword id="KW-0479">Metal-binding</keyword>
<keyword id="KW-0645">Protease</keyword>
<keyword id="KW-1185">Reference proteome</keyword>
<keyword id="KW-0964">Secreted</keyword>
<keyword id="KW-0732">Signal</keyword>
<keyword id="KW-0788">Thiol protease</keyword>
<keyword id="KW-0862">Zinc</keyword>
<keyword id="KW-0865">Zymogen</keyword>